<protein>
    <recommendedName>
        <fullName>Kinetochore protein Nuf2</fullName>
    </recommendedName>
    <alternativeName>
        <fullName>Cell division cycle-associated protein 1</fullName>
    </alternativeName>
</protein>
<evidence type="ECO:0000250" key="1"/>
<evidence type="ECO:0000250" key="2">
    <source>
        <dbReference type="UniProtKB" id="Q9BZD4"/>
    </source>
</evidence>
<evidence type="ECO:0000255" key="3"/>
<evidence type="ECO:0000303" key="4">
    <source>
    </source>
</evidence>
<evidence type="ECO:0000305" key="5"/>
<evidence type="ECO:0007744" key="6">
    <source>
    </source>
</evidence>
<comment type="function">
    <text evidence="2">Acts as a component of the essential kinetochore-associated NDC80 complex, which is required for chromosome segregation and spindle checkpoint activity. Required for kinetochore integrity and the organization of stable microtubule binding sites in the outer plate of the kinetochore. The NDC80 complex synergistically enhances the affinity of the SKA1 complex for microtubules and may allow the NDC80 complex to track depolymerizing microtubules.</text>
</comment>
<comment type="subunit">
    <text evidence="1">Component of the NDC80 complex, which consists of NDC80/HEC1, CDCA1, SPBC24 and SPBC25. The NDC80 complex is formed by two subcomplexes composed of NDC80/HEC1-CDCA1 and SPBC24-SPBC25. Each subcomplex is formed by parallel interactions through the coiled-coil domains of individual subunits. Formation of a tetrameric complex is mediated by interactions between the C-terminal regions of both subunits of the NDC80/HEC1-CDCA1 subcomplex and the N-terminal regions of both subunits of the SPBC24-SPBC25 complex. The tetrameric NDC80 complex has an elongated rod-like structure with globular domains at either end. May interact with AURKB/Aurora-B (By similarity).</text>
</comment>
<comment type="subcellular location">
    <subcellularLocation>
        <location evidence="1">Nucleus</location>
    </subcellularLocation>
    <subcellularLocation>
        <location evidence="1">Chromosome</location>
        <location evidence="1">Centromere</location>
        <location evidence="1">Kinetochore</location>
    </subcellularLocation>
    <text evidence="1">Localizes to kinetochores from late prophase to anaphase. Localizes specifically to the outer plate of the kinetochore (By similarity).</text>
</comment>
<comment type="alternative products">
    <event type="alternative splicing"/>
    <isoform>
        <id>Q99P69-1</id>
        <name>1</name>
        <sequence type="displayed"/>
    </isoform>
    <isoform>
        <id>Q99P69-2</id>
        <name>2</name>
        <sequence type="described" ref="VSP_020553 VSP_020554"/>
    </isoform>
</comment>
<comment type="PTM">
    <text evidence="1">Can be phosphorylated by AURKA and AURKB.</text>
</comment>
<comment type="similarity">
    <text evidence="5">Belongs to the NUF2 family.</text>
</comment>
<comment type="sequence caution" evidence="5">
    <conflict type="frameshift">
        <sequence resource="EMBL-CDS" id="BAC41008"/>
    </conflict>
</comment>
<name>NUF2_MOUSE</name>
<feature type="chain" id="PRO_0000249814" description="Kinetochore protein Nuf2">
    <location>
        <begin position="1"/>
        <end position="463"/>
    </location>
</feature>
<feature type="region of interest" description="Interaction with the N-terminus of NDC80" evidence="1">
    <location>
        <begin position="1"/>
        <end position="385"/>
    </location>
</feature>
<feature type="region of interest" description="Interaction with the C-terminus of NDC80 and the SPBC24-SPBC25 subcomplex" evidence="1">
    <location>
        <begin position="386"/>
        <end position="463"/>
    </location>
</feature>
<feature type="coiled-coil region" evidence="3">
    <location>
        <begin position="149"/>
        <end position="341"/>
    </location>
</feature>
<feature type="coiled-coil region" evidence="3">
    <location>
        <begin position="389"/>
        <end position="463"/>
    </location>
</feature>
<feature type="modified residue" description="N-acetylmethionine" evidence="2">
    <location>
        <position position="1"/>
    </location>
</feature>
<feature type="modified residue" description="Phosphoserine" evidence="6">
    <location>
        <position position="247"/>
    </location>
</feature>
<feature type="splice variant" id="VSP_020553" description="In isoform 2." evidence="4">
    <original>EKVMEQYDIYRDSVDCLPSCQLEVQLY</original>
    <variation>VSRFTLWHSLNYLVSVQISLLNFYAPL</variation>
    <location>
        <begin position="270"/>
        <end position="296"/>
    </location>
</feature>
<feature type="splice variant" id="VSP_020554" description="In isoform 2." evidence="4">
    <location>
        <begin position="297"/>
        <end position="429"/>
    </location>
</feature>
<feature type="sequence conflict" description="In Ref. 2; BAC41008." evidence="5" ref="2">
    <original>L</original>
    <variation>W</variation>
    <location>
        <position position="4"/>
    </location>
</feature>
<feature type="sequence conflict" description="In Ref. 2; BAC41008." evidence="5" ref="2">
    <original>L</original>
    <variation>R</variation>
    <location>
        <position position="61"/>
    </location>
</feature>
<feature type="sequence conflict" description="In Ref. 2; BAB27973." evidence="5" ref="2">
    <original>V</original>
    <variation>G</variation>
    <location>
        <position position="101"/>
    </location>
</feature>
<feature type="sequence conflict" description="In Ref. 1; AAK01427." evidence="5" ref="1">
    <original>K</original>
    <variation>E</variation>
    <location>
        <position position="137"/>
    </location>
</feature>
<feature type="sequence conflict" description="In Ref. 2; BAC41008." evidence="5" ref="2">
    <original>Q</original>
    <variation>P</variation>
    <location>
        <position position="144"/>
    </location>
</feature>
<feature type="sequence conflict" description="In Ref. 2; BAC41008." evidence="5" ref="2">
    <original>N</original>
    <variation>H</variation>
    <location>
        <position position="157"/>
    </location>
</feature>
<feature type="sequence conflict" description="In Ref. 2; BAC41008." evidence="5" ref="2">
    <original>K</original>
    <variation>Q</variation>
    <location>
        <position position="221"/>
    </location>
</feature>
<gene>
    <name type="primary">Nuf2</name>
    <name type="synonym">Cdca1</name>
    <name type="synonym">Nuf2r</name>
</gene>
<reference key="1">
    <citation type="journal article" date="2001" name="J. Cell Biol.">
        <title>The Ndc80p complex from Saccharomyces cerevisiae contains conserved centromere components and has a function in chromosome segregation.</title>
        <authorList>
            <person name="Wigge P.A."/>
            <person name="Kilmartin J.V."/>
        </authorList>
    </citation>
    <scope>NUCLEOTIDE SEQUENCE [MRNA] (ISOFORM 1)</scope>
    <source>
        <strain>C57BL/6J</strain>
    </source>
</reference>
<reference key="2">
    <citation type="journal article" date="2005" name="Science">
        <title>The transcriptional landscape of the mammalian genome.</title>
        <authorList>
            <person name="Carninci P."/>
            <person name="Kasukawa T."/>
            <person name="Katayama S."/>
            <person name="Gough J."/>
            <person name="Frith M.C."/>
            <person name="Maeda N."/>
            <person name="Oyama R."/>
            <person name="Ravasi T."/>
            <person name="Lenhard B."/>
            <person name="Wells C."/>
            <person name="Kodzius R."/>
            <person name="Shimokawa K."/>
            <person name="Bajic V.B."/>
            <person name="Brenner S.E."/>
            <person name="Batalov S."/>
            <person name="Forrest A.R."/>
            <person name="Zavolan M."/>
            <person name="Davis M.J."/>
            <person name="Wilming L.G."/>
            <person name="Aidinis V."/>
            <person name="Allen J.E."/>
            <person name="Ambesi-Impiombato A."/>
            <person name="Apweiler R."/>
            <person name="Aturaliya R.N."/>
            <person name="Bailey T.L."/>
            <person name="Bansal M."/>
            <person name="Baxter L."/>
            <person name="Beisel K.W."/>
            <person name="Bersano T."/>
            <person name="Bono H."/>
            <person name="Chalk A.M."/>
            <person name="Chiu K.P."/>
            <person name="Choudhary V."/>
            <person name="Christoffels A."/>
            <person name="Clutterbuck D.R."/>
            <person name="Crowe M.L."/>
            <person name="Dalla E."/>
            <person name="Dalrymple B.P."/>
            <person name="de Bono B."/>
            <person name="Della Gatta G."/>
            <person name="di Bernardo D."/>
            <person name="Down T."/>
            <person name="Engstrom P."/>
            <person name="Fagiolini M."/>
            <person name="Faulkner G."/>
            <person name="Fletcher C.F."/>
            <person name="Fukushima T."/>
            <person name="Furuno M."/>
            <person name="Futaki S."/>
            <person name="Gariboldi M."/>
            <person name="Georgii-Hemming P."/>
            <person name="Gingeras T.R."/>
            <person name="Gojobori T."/>
            <person name="Green R.E."/>
            <person name="Gustincich S."/>
            <person name="Harbers M."/>
            <person name="Hayashi Y."/>
            <person name="Hensch T.K."/>
            <person name="Hirokawa N."/>
            <person name="Hill D."/>
            <person name="Huminiecki L."/>
            <person name="Iacono M."/>
            <person name="Ikeo K."/>
            <person name="Iwama A."/>
            <person name="Ishikawa T."/>
            <person name="Jakt M."/>
            <person name="Kanapin A."/>
            <person name="Katoh M."/>
            <person name="Kawasawa Y."/>
            <person name="Kelso J."/>
            <person name="Kitamura H."/>
            <person name="Kitano H."/>
            <person name="Kollias G."/>
            <person name="Krishnan S.P."/>
            <person name="Kruger A."/>
            <person name="Kummerfeld S.K."/>
            <person name="Kurochkin I.V."/>
            <person name="Lareau L.F."/>
            <person name="Lazarevic D."/>
            <person name="Lipovich L."/>
            <person name="Liu J."/>
            <person name="Liuni S."/>
            <person name="McWilliam S."/>
            <person name="Madan Babu M."/>
            <person name="Madera M."/>
            <person name="Marchionni L."/>
            <person name="Matsuda H."/>
            <person name="Matsuzawa S."/>
            <person name="Miki H."/>
            <person name="Mignone F."/>
            <person name="Miyake S."/>
            <person name="Morris K."/>
            <person name="Mottagui-Tabar S."/>
            <person name="Mulder N."/>
            <person name="Nakano N."/>
            <person name="Nakauchi H."/>
            <person name="Ng P."/>
            <person name="Nilsson R."/>
            <person name="Nishiguchi S."/>
            <person name="Nishikawa S."/>
            <person name="Nori F."/>
            <person name="Ohara O."/>
            <person name="Okazaki Y."/>
            <person name="Orlando V."/>
            <person name="Pang K.C."/>
            <person name="Pavan W.J."/>
            <person name="Pavesi G."/>
            <person name="Pesole G."/>
            <person name="Petrovsky N."/>
            <person name="Piazza S."/>
            <person name="Reed J."/>
            <person name="Reid J.F."/>
            <person name="Ring B.Z."/>
            <person name="Ringwald M."/>
            <person name="Rost B."/>
            <person name="Ruan Y."/>
            <person name="Salzberg S.L."/>
            <person name="Sandelin A."/>
            <person name="Schneider C."/>
            <person name="Schoenbach C."/>
            <person name="Sekiguchi K."/>
            <person name="Semple C.A."/>
            <person name="Seno S."/>
            <person name="Sessa L."/>
            <person name="Sheng Y."/>
            <person name="Shibata Y."/>
            <person name="Shimada H."/>
            <person name="Shimada K."/>
            <person name="Silva D."/>
            <person name="Sinclair B."/>
            <person name="Sperling S."/>
            <person name="Stupka E."/>
            <person name="Sugiura K."/>
            <person name="Sultana R."/>
            <person name="Takenaka Y."/>
            <person name="Taki K."/>
            <person name="Tammoja K."/>
            <person name="Tan S.L."/>
            <person name="Tang S."/>
            <person name="Taylor M.S."/>
            <person name="Tegner J."/>
            <person name="Teichmann S.A."/>
            <person name="Ueda H.R."/>
            <person name="van Nimwegen E."/>
            <person name="Verardo R."/>
            <person name="Wei C.L."/>
            <person name="Yagi K."/>
            <person name="Yamanishi H."/>
            <person name="Zabarovsky E."/>
            <person name="Zhu S."/>
            <person name="Zimmer A."/>
            <person name="Hide W."/>
            <person name="Bult C."/>
            <person name="Grimmond S.M."/>
            <person name="Teasdale R.D."/>
            <person name="Liu E.T."/>
            <person name="Brusic V."/>
            <person name="Quackenbush J."/>
            <person name="Wahlestedt C."/>
            <person name="Mattick J.S."/>
            <person name="Hume D.A."/>
            <person name="Kai C."/>
            <person name="Sasaki D."/>
            <person name="Tomaru Y."/>
            <person name="Fukuda S."/>
            <person name="Kanamori-Katayama M."/>
            <person name="Suzuki M."/>
            <person name="Aoki J."/>
            <person name="Arakawa T."/>
            <person name="Iida J."/>
            <person name="Imamura K."/>
            <person name="Itoh M."/>
            <person name="Kato T."/>
            <person name="Kawaji H."/>
            <person name="Kawagashira N."/>
            <person name="Kawashima T."/>
            <person name="Kojima M."/>
            <person name="Kondo S."/>
            <person name="Konno H."/>
            <person name="Nakano K."/>
            <person name="Ninomiya N."/>
            <person name="Nishio T."/>
            <person name="Okada M."/>
            <person name="Plessy C."/>
            <person name="Shibata K."/>
            <person name="Shiraki T."/>
            <person name="Suzuki S."/>
            <person name="Tagami M."/>
            <person name="Waki K."/>
            <person name="Watahiki A."/>
            <person name="Okamura-Oho Y."/>
            <person name="Suzuki H."/>
            <person name="Kawai J."/>
            <person name="Hayashizaki Y."/>
        </authorList>
    </citation>
    <scope>NUCLEOTIDE SEQUENCE [LARGE SCALE MRNA] (ISOFORMS 1 AND 2)</scope>
    <source>
        <strain>C57BL/6J</strain>
        <tissue>Colon</tissue>
        <tissue>Egg</tissue>
        <tissue>Skin</tissue>
    </source>
</reference>
<reference key="3">
    <citation type="journal article" date="2004" name="Genome Res.">
        <title>The status, quality, and expansion of the NIH full-length cDNA project: the Mammalian Gene Collection (MGC).</title>
        <authorList>
            <consortium name="The MGC Project Team"/>
        </authorList>
    </citation>
    <scope>NUCLEOTIDE SEQUENCE [LARGE SCALE MRNA] (ISOFORM 1)</scope>
    <source>
        <strain>Czech II</strain>
        <tissue>Mammary tumor</tissue>
    </source>
</reference>
<reference key="4">
    <citation type="journal article" date="2010" name="Cell">
        <title>A tissue-specific atlas of mouse protein phosphorylation and expression.</title>
        <authorList>
            <person name="Huttlin E.L."/>
            <person name="Jedrychowski M.P."/>
            <person name="Elias J.E."/>
            <person name="Goswami T."/>
            <person name="Rad R."/>
            <person name="Beausoleil S.A."/>
            <person name="Villen J."/>
            <person name="Haas W."/>
            <person name="Sowa M.E."/>
            <person name="Gygi S.P."/>
        </authorList>
    </citation>
    <scope>PHOSPHORYLATION [LARGE SCALE ANALYSIS] AT SER-247</scope>
    <scope>IDENTIFICATION BY MASS SPECTROMETRY [LARGE SCALE ANALYSIS]</scope>
    <source>
        <tissue>Lung</tissue>
    </source>
</reference>
<organism>
    <name type="scientific">Mus musculus</name>
    <name type="common">Mouse</name>
    <dbReference type="NCBI Taxonomy" id="10090"/>
    <lineage>
        <taxon>Eukaryota</taxon>
        <taxon>Metazoa</taxon>
        <taxon>Chordata</taxon>
        <taxon>Craniata</taxon>
        <taxon>Vertebrata</taxon>
        <taxon>Euteleostomi</taxon>
        <taxon>Mammalia</taxon>
        <taxon>Eutheria</taxon>
        <taxon>Euarchontoglires</taxon>
        <taxon>Glires</taxon>
        <taxon>Rodentia</taxon>
        <taxon>Myomorpha</taxon>
        <taxon>Muroidea</taxon>
        <taxon>Muridae</taxon>
        <taxon>Murinae</taxon>
        <taxon>Mus</taxon>
        <taxon>Mus</taxon>
    </lineage>
</organism>
<accession>Q99P69</accession>
<accession>Q8BTK7</accession>
<accession>Q8VE05</accession>
<accession>Q9CST5</accession>
<keyword id="KW-0007">Acetylation</keyword>
<keyword id="KW-0025">Alternative splicing</keyword>
<keyword id="KW-0131">Cell cycle</keyword>
<keyword id="KW-0132">Cell division</keyword>
<keyword id="KW-0137">Centromere</keyword>
<keyword id="KW-0158">Chromosome</keyword>
<keyword id="KW-0175">Coiled coil</keyword>
<keyword id="KW-0995">Kinetochore</keyword>
<keyword id="KW-0498">Mitosis</keyword>
<keyword id="KW-0539">Nucleus</keyword>
<keyword id="KW-0597">Phosphoprotein</keyword>
<keyword id="KW-1185">Reference proteome</keyword>
<proteinExistence type="evidence at protein level"/>
<sequence length="463" mass="54594">METLSFPRYNVAELVVHIRNKLLTGADGKNLSKSDFLPNPKSDVLYMIYMKALQLVYGVRLEHFYMMPMNIEVTYPHLMEGFLPVRSLFFYMDSFMPICRVNDFEIVDILNPRTNRTSRFLSGIINFIHFRETCLEKCEEFLLQNKSSMVRMQQLSNVHQEALMKLEKLNTVPAEEREEFKQFMDDIQELQHLLNEEFRQKTTLLQEEYAKMKSDISEKTKHLNEQKLSLVSLKEVEDNLKSKIVDSPEKLKNYKDKMKGTVQKLRSAREKVMEQYDIYRDSVDCLPSCQLEVQLYQKKSQDLADNREKLSSLLKESLNLEDQIESDSSELKKLKTEENSLIRMTTVKKEKLATARFKINKKQEDVKHYKQAMIEDCNKVQEKRDAVCEQVTTVNQEIHKIKSAIQQLRDTKKREILKSQEIFVNLKSALEKYHEGIEKVAEERSAKLEEKTAELKKRMVRMV</sequence>
<dbReference type="EMBL" id="AF326732">
    <property type="protein sequence ID" value="AAK01427.1"/>
    <property type="molecule type" value="mRNA"/>
</dbReference>
<dbReference type="EMBL" id="AK012011">
    <property type="protein sequence ID" value="BAB27973.1"/>
    <property type="molecule type" value="mRNA"/>
</dbReference>
<dbReference type="EMBL" id="AK089939">
    <property type="protein sequence ID" value="BAC41008.1"/>
    <property type="status" value="ALT_FRAME"/>
    <property type="molecule type" value="mRNA"/>
</dbReference>
<dbReference type="EMBL" id="AK132467">
    <property type="protein sequence ID" value="BAE21183.1"/>
    <property type="molecule type" value="mRNA"/>
</dbReference>
<dbReference type="EMBL" id="AK162249">
    <property type="protein sequence ID" value="BAE36815.1"/>
    <property type="molecule type" value="mRNA"/>
</dbReference>
<dbReference type="EMBL" id="BC020026">
    <property type="protein sequence ID" value="AAH20026.1"/>
    <property type="molecule type" value="mRNA"/>
</dbReference>
<dbReference type="CCDS" id="CCDS15463.1">
    <molecule id="Q99P69-1"/>
</dbReference>
<dbReference type="RefSeq" id="NP_001342088.1">
    <molecule id="Q99P69-1"/>
    <property type="nucleotide sequence ID" value="NM_001355159.1"/>
</dbReference>
<dbReference type="RefSeq" id="NP_075773.2">
    <molecule id="Q99P69-1"/>
    <property type="nucleotide sequence ID" value="NM_023284.3"/>
</dbReference>
<dbReference type="RefSeq" id="XP_006497021.1">
    <property type="nucleotide sequence ID" value="XM_006496958.1"/>
</dbReference>
<dbReference type="SMR" id="Q99P69"/>
<dbReference type="BioGRID" id="211850">
    <property type="interactions" value="1"/>
</dbReference>
<dbReference type="ComplexPortal" id="CPX-551">
    <property type="entry name" value="Ndc80 complex"/>
</dbReference>
<dbReference type="FunCoup" id="Q99P69">
    <property type="interactions" value="775"/>
</dbReference>
<dbReference type="STRING" id="10090.ENSMUSP00000106999"/>
<dbReference type="iPTMnet" id="Q99P69"/>
<dbReference type="PhosphoSitePlus" id="Q99P69"/>
<dbReference type="SwissPalm" id="Q99P69"/>
<dbReference type="PaxDb" id="10090-ENSMUSP00000106999"/>
<dbReference type="PeptideAtlas" id="Q99P69"/>
<dbReference type="ProteomicsDB" id="295462">
    <molecule id="Q99P69-1"/>
</dbReference>
<dbReference type="ProteomicsDB" id="295463">
    <molecule id="Q99P69-2"/>
</dbReference>
<dbReference type="Pumba" id="Q99P69"/>
<dbReference type="Antibodypedia" id="34328">
    <property type="antibodies" value="211 antibodies from 31 providers"/>
</dbReference>
<dbReference type="Ensembl" id="ENSMUST00000028000.13">
    <molecule id="Q99P69-1"/>
    <property type="protein sequence ID" value="ENSMUSP00000028000.8"/>
    <property type="gene ID" value="ENSMUSG00000026683.15"/>
</dbReference>
<dbReference type="Ensembl" id="ENSMUST00000111368.8">
    <molecule id="Q99P69-1"/>
    <property type="protein sequence ID" value="ENSMUSP00000106999.2"/>
    <property type="gene ID" value="ENSMUSG00000026683.15"/>
</dbReference>
<dbReference type="GeneID" id="66977"/>
<dbReference type="KEGG" id="mmu:66977"/>
<dbReference type="UCSC" id="uc007dlj.1">
    <molecule id="Q99P69-1"/>
    <property type="organism name" value="mouse"/>
</dbReference>
<dbReference type="UCSC" id="uc007dll.1">
    <molecule id="Q99P69-2"/>
    <property type="organism name" value="mouse"/>
</dbReference>
<dbReference type="AGR" id="MGI:1914227"/>
<dbReference type="CTD" id="83540"/>
<dbReference type="MGI" id="MGI:1914227">
    <property type="gene designation" value="Nuf2"/>
</dbReference>
<dbReference type="VEuPathDB" id="HostDB:ENSMUSG00000026683"/>
<dbReference type="eggNOG" id="KOG4438">
    <property type="taxonomic scope" value="Eukaryota"/>
</dbReference>
<dbReference type="GeneTree" id="ENSGT00390000004199"/>
<dbReference type="HOGENOM" id="CLU_589957_0_0_1"/>
<dbReference type="InParanoid" id="Q99P69"/>
<dbReference type="OMA" id="YLKMEAH"/>
<dbReference type="OrthoDB" id="8194677at2759"/>
<dbReference type="PhylomeDB" id="Q99P69"/>
<dbReference type="TreeFam" id="TF101067"/>
<dbReference type="Reactome" id="R-MMU-141444">
    <property type="pathway name" value="Amplification of signal from unattached kinetochores via a MAD2 inhibitory signal"/>
</dbReference>
<dbReference type="Reactome" id="R-MMU-2467813">
    <property type="pathway name" value="Separation of Sister Chromatids"/>
</dbReference>
<dbReference type="Reactome" id="R-MMU-2500257">
    <property type="pathway name" value="Resolution of Sister Chromatid Cohesion"/>
</dbReference>
<dbReference type="Reactome" id="R-MMU-5663220">
    <property type="pathway name" value="RHO GTPases Activate Formins"/>
</dbReference>
<dbReference type="Reactome" id="R-MMU-68877">
    <property type="pathway name" value="Mitotic Prometaphase"/>
</dbReference>
<dbReference type="Reactome" id="R-MMU-9648025">
    <property type="pathway name" value="EML4 and NUDC in mitotic spindle formation"/>
</dbReference>
<dbReference type="BioGRID-ORCS" id="66977">
    <property type="hits" value="26 hits in 78 CRISPR screens"/>
</dbReference>
<dbReference type="ChiTaRS" id="Nuf2">
    <property type="organism name" value="mouse"/>
</dbReference>
<dbReference type="PRO" id="PR:Q99P69"/>
<dbReference type="Proteomes" id="UP000000589">
    <property type="component" value="Chromosome 1"/>
</dbReference>
<dbReference type="RNAct" id="Q99P69">
    <property type="molecule type" value="protein"/>
</dbReference>
<dbReference type="Bgee" id="ENSMUSG00000026683">
    <property type="expression patterns" value="Expressed in spermatocyte and 206 other cell types or tissues"/>
</dbReference>
<dbReference type="ExpressionAtlas" id="Q99P69">
    <property type="expression patterns" value="baseline and differential"/>
</dbReference>
<dbReference type="GO" id="GO:0005829">
    <property type="term" value="C:cytosol"/>
    <property type="evidence" value="ECO:0007669"/>
    <property type="project" value="Ensembl"/>
</dbReference>
<dbReference type="GO" id="GO:0000776">
    <property type="term" value="C:kinetochore"/>
    <property type="evidence" value="ECO:0000266"/>
    <property type="project" value="MGI"/>
</dbReference>
<dbReference type="GO" id="GO:0031262">
    <property type="term" value="C:Ndc80 complex"/>
    <property type="evidence" value="ECO:0000250"/>
    <property type="project" value="UniProtKB"/>
</dbReference>
<dbReference type="GO" id="GO:0005654">
    <property type="term" value="C:nucleoplasm"/>
    <property type="evidence" value="ECO:0007669"/>
    <property type="project" value="Ensembl"/>
</dbReference>
<dbReference type="GO" id="GO:0008017">
    <property type="term" value="F:microtubule binding"/>
    <property type="evidence" value="ECO:0000250"/>
    <property type="project" value="UniProtKB"/>
</dbReference>
<dbReference type="GO" id="GO:0008608">
    <property type="term" value="P:attachment of spindle microtubules to kinetochore"/>
    <property type="evidence" value="ECO:0000266"/>
    <property type="project" value="MGI"/>
</dbReference>
<dbReference type="GO" id="GO:0051301">
    <property type="term" value="P:cell division"/>
    <property type="evidence" value="ECO:0007669"/>
    <property type="project" value="UniProtKB-KW"/>
</dbReference>
<dbReference type="GO" id="GO:0007059">
    <property type="term" value="P:chromosome segregation"/>
    <property type="evidence" value="ECO:0000303"/>
    <property type="project" value="ComplexPortal"/>
</dbReference>
<dbReference type="GO" id="GO:0007094">
    <property type="term" value="P:mitotic spindle assembly checkpoint signaling"/>
    <property type="evidence" value="ECO:0000303"/>
    <property type="project" value="ComplexPortal"/>
</dbReference>
<dbReference type="FunFam" id="1.10.418.60:FF:000001">
    <property type="entry name" value="NDC80 kinetochore complex component NUF2"/>
    <property type="match status" value="1"/>
</dbReference>
<dbReference type="Gene3D" id="1.10.418.60">
    <property type="entry name" value="Ncd80 complex, Nuf2 subunit"/>
    <property type="match status" value="1"/>
</dbReference>
<dbReference type="InterPro" id="IPR005549">
    <property type="entry name" value="Kinetochore_Nuf2_N"/>
</dbReference>
<dbReference type="InterPro" id="IPR038275">
    <property type="entry name" value="Nuf2_N_sf"/>
</dbReference>
<dbReference type="PANTHER" id="PTHR21650:SF2">
    <property type="entry name" value="KINETOCHORE PROTEIN NUF2"/>
    <property type="match status" value="1"/>
</dbReference>
<dbReference type="PANTHER" id="PTHR21650">
    <property type="entry name" value="MEMBRALIN/KINETOCHORE PROTEIN NUF2"/>
    <property type="match status" value="1"/>
</dbReference>
<dbReference type="Pfam" id="PF03800">
    <property type="entry name" value="Nuf2"/>
    <property type="match status" value="1"/>
</dbReference>